<gene>
    <name evidence="10" type="primary">chl-1</name>
    <name evidence="10" type="ORF">M03C11.2</name>
</gene>
<proteinExistence type="inferred from homology"/>
<protein>
    <recommendedName>
        <fullName evidence="2">ATP-dependent DNA helicase chl-1</fullName>
        <ecNumber evidence="3">5.6.2.3</ecNumber>
    </recommendedName>
    <alternativeName>
        <fullName evidence="10">Chromosome loss protein homolog</fullName>
    </alternativeName>
    <alternativeName>
        <fullName evidence="8">DNA 5'-3' helicase chl-1</fullName>
    </alternativeName>
</protein>
<keyword id="KW-0067">ATP-binding</keyword>
<keyword id="KW-0227">DNA damage</keyword>
<keyword id="KW-0234">DNA repair</keyword>
<keyword id="KW-0347">Helicase</keyword>
<keyword id="KW-0378">Hydrolase</keyword>
<keyword id="KW-0408">Iron</keyword>
<keyword id="KW-0411">Iron-sulfur</keyword>
<keyword id="KW-0413">Isomerase</keyword>
<keyword id="KW-0479">Metal-binding</keyword>
<keyword id="KW-0547">Nucleotide-binding</keyword>
<keyword id="KW-0539">Nucleus</keyword>
<keyword id="KW-1185">Reference proteome</keyword>
<accession>Q21489</accession>
<dbReference type="EC" id="5.6.2.3" evidence="3"/>
<dbReference type="EMBL" id="Z49128">
    <property type="protein sequence ID" value="CAA88959.2"/>
    <property type="molecule type" value="Genomic_DNA"/>
</dbReference>
<dbReference type="RefSeq" id="NP_499295.2">
    <property type="nucleotide sequence ID" value="NM_066894.8"/>
</dbReference>
<dbReference type="SMR" id="Q21489"/>
<dbReference type="BioGRID" id="41650">
    <property type="interactions" value="2"/>
</dbReference>
<dbReference type="FunCoup" id="Q21489">
    <property type="interactions" value="2079"/>
</dbReference>
<dbReference type="STRING" id="6239.M03C11.2.1"/>
<dbReference type="PaxDb" id="6239-M03C11.2"/>
<dbReference type="EnsemblMetazoa" id="M03C11.2.1">
    <property type="protein sequence ID" value="M03C11.2.1"/>
    <property type="gene ID" value="WBGene00010839"/>
</dbReference>
<dbReference type="EnsemblMetazoa" id="M03C11.2.2">
    <property type="protein sequence ID" value="M03C11.2.2"/>
    <property type="gene ID" value="WBGene00010839"/>
</dbReference>
<dbReference type="GeneID" id="176457"/>
<dbReference type="KEGG" id="cel:CELE_M03C11.2"/>
<dbReference type="UCSC" id="M03C11.2">
    <property type="organism name" value="c. elegans"/>
</dbReference>
<dbReference type="AGR" id="WB:WBGene00010839"/>
<dbReference type="CTD" id="176457"/>
<dbReference type="WormBase" id="M03C11.2">
    <property type="protein sequence ID" value="CE44273"/>
    <property type="gene ID" value="WBGene00010839"/>
    <property type="gene designation" value="chl-1"/>
</dbReference>
<dbReference type="eggNOG" id="KOG1133">
    <property type="taxonomic scope" value="Eukaryota"/>
</dbReference>
<dbReference type="GeneTree" id="ENSGT00950000182970"/>
<dbReference type="HOGENOM" id="CLU_006515_2_1_1"/>
<dbReference type="InParanoid" id="Q21489"/>
<dbReference type="OMA" id="QTHQFRD"/>
<dbReference type="OrthoDB" id="267079at2759"/>
<dbReference type="PhylomeDB" id="Q21489"/>
<dbReference type="PRO" id="PR:Q21489"/>
<dbReference type="Proteomes" id="UP000001940">
    <property type="component" value="Chromosome III"/>
</dbReference>
<dbReference type="Bgee" id="WBGene00010839">
    <property type="expression patterns" value="Expressed in germ line (C elegans) and 3 other cell types or tissues"/>
</dbReference>
<dbReference type="GO" id="GO:0005634">
    <property type="term" value="C:nucleus"/>
    <property type="evidence" value="ECO:0000318"/>
    <property type="project" value="GO_Central"/>
</dbReference>
<dbReference type="GO" id="GO:0005524">
    <property type="term" value="F:ATP binding"/>
    <property type="evidence" value="ECO:0007669"/>
    <property type="project" value="UniProtKB-KW"/>
</dbReference>
<dbReference type="GO" id="GO:0016887">
    <property type="term" value="F:ATP hydrolysis activity"/>
    <property type="evidence" value="ECO:0007669"/>
    <property type="project" value="RHEA"/>
</dbReference>
<dbReference type="GO" id="GO:0003677">
    <property type="term" value="F:DNA binding"/>
    <property type="evidence" value="ECO:0007669"/>
    <property type="project" value="InterPro"/>
</dbReference>
<dbReference type="GO" id="GO:0003678">
    <property type="term" value="F:DNA helicase activity"/>
    <property type="evidence" value="ECO:0000250"/>
    <property type="project" value="UniProtKB"/>
</dbReference>
<dbReference type="GO" id="GO:0051536">
    <property type="term" value="F:iron-sulfur cluster binding"/>
    <property type="evidence" value="ECO:0007669"/>
    <property type="project" value="UniProtKB-KW"/>
</dbReference>
<dbReference type="GO" id="GO:0046872">
    <property type="term" value="F:metal ion binding"/>
    <property type="evidence" value="ECO:0007669"/>
    <property type="project" value="UniProtKB-KW"/>
</dbReference>
<dbReference type="GO" id="GO:0006281">
    <property type="term" value="P:DNA repair"/>
    <property type="evidence" value="ECO:0007669"/>
    <property type="project" value="UniProtKB-KW"/>
</dbReference>
<dbReference type="GO" id="GO:0034085">
    <property type="term" value="P:establishment of sister chromatid cohesion"/>
    <property type="evidence" value="ECO:0000318"/>
    <property type="project" value="GO_Central"/>
</dbReference>
<dbReference type="GO" id="GO:0008284">
    <property type="term" value="P:positive regulation of cell population proliferation"/>
    <property type="evidence" value="ECO:0000315"/>
    <property type="project" value="UniProtKB"/>
</dbReference>
<dbReference type="CDD" id="cd18788">
    <property type="entry name" value="SF2_C_XPD"/>
    <property type="match status" value="1"/>
</dbReference>
<dbReference type="FunFam" id="3.40.50.300:FF:003439">
    <property type="entry name" value="ATP-dependent DNA helicase CHL1"/>
    <property type="match status" value="1"/>
</dbReference>
<dbReference type="FunFam" id="3.40.50.300:FF:003795">
    <property type="entry name" value="ATP-dependent DNA helicase CHL1"/>
    <property type="match status" value="1"/>
</dbReference>
<dbReference type="FunFam" id="3.40.50.300:FF:001372">
    <property type="entry name" value="ATP-dependent DNA helicase chl1"/>
    <property type="match status" value="1"/>
</dbReference>
<dbReference type="Gene3D" id="3.40.50.300">
    <property type="entry name" value="P-loop containing nucleotide triphosphate hydrolases"/>
    <property type="match status" value="3"/>
</dbReference>
<dbReference type="InterPro" id="IPR006555">
    <property type="entry name" value="ATP-dep_Helicase_C"/>
</dbReference>
<dbReference type="InterPro" id="IPR045028">
    <property type="entry name" value="DinG/Rad3-like"/>
</dbReference>
<dbReference type="InterPro" id="IPR014013">
    <property type="entry name" value="Helic_SF1/SF2_ATP-bd_DinG/Rad3"/>
</dbReference>
<dbReference type="InterPro" id="IPR006554">
    <property type="entry name" value="Helicase-like_DEXD_c2"/>
</dbReference>
<dbReference type="InterPro" id="IPR027417">
    <property type="entry name" value="P-loop_NTPase"/>
</dbReference>
<dbReference type="InterPro" id="IPR010614">
    <property type="entry name" value="RAD3-like_helicase_DEAD"/>
</dbReference>
<dbReference type="InterPro" id="IPR013020">
    <property type="entry name" value="Rad3/Chl1-like"/>
</dbReference>
<dbReference type="NCBIfam" id="TIGR00604">
    <property type="entry name" value="rad3"/>
    <property type="match status" value="1"/>
</dbReference>
<dbReference type="PANTHER" id="PTHR11472:SF41">
    <property type="entry name" value="ATP-DEPENDENT DNA HELICASE DDX11-RELATED"/>
    <property type="match status" value="1"/>
</dbReference>
<dbReference type="PANTHER" id="PTHR11472">
    <property type="entry name" value="DNA REPAIR DEAD HELICASE RAD3/XP-D SUBFAMILY MEMBER"/>
    <property type="match status" value="1"/>
</dbReference>
<dbReference type="Pfam" id="PF06733">
    <property type="entry name" value="DEAD_2"/>
    <property type="match status" value="1"/>
</dbReference>
<dbReference type="Pfam" id="PF13307">
    <property type="entry name" value="Helicase_C_2"/>
    <property type="match status" value="1"/>
</dbReference>
<dbReference type="SMART" id="SM00488">
    <property type="entry name" value="DEXDc2"/>
    <property type="match status" value="1"/>
</dbReference>
<dbReference type="SMART" id="SM00491">
    <property type="entry name" value="HELICc2"/>
    <property type="match status" value="1"/>
</dbReference>
<dbReference type="SUPFAM" id="SSF52540">
    <property type="entry name" value="P-loop containing nucleoside triphosphate hydrolases"/>
    <property type="match status" value="1"/>
</dbReference>
<dbReference type="PROSITE" id="PS51193">
    <property type="entry name" value="HELICASE_ATP_BIND_2"/>
    <property type="match status" value="1"/>
</dbReference>
<reference evidence="9" key="1">
    <citation type="journal article" date="1998" name="Science">
        <title>Genome sequence of the nematode C. elegans: a platform for investigating biology.</title>
        <authorList>
            <consortium name="The C. elegans sequencing consortium"/>
        </authorList>
    </citation>
    <scope>NUCLEOTIDE SEQUENCE [LARGE SCALE GENOMIC DNA]</scope>
    <source>
        <strain evidence="9">Bristol N2</strain>
    </source>
</reference>
<reference evidence="8" key="2">
    <citation type="journal article" date="2011" name="DNA Repair">
        <title>CHL-1 provides an essential function affecting cell proliferation and chromosome stability in Caenorhabditis elegans.</title>
        <authorList>
            <person name="Chung G."/>
            <person name="O'Neil N.J."/>
            <person name="Rose A.M."/>
        </authorList>
    </citation>
    <scope>FUNCTION</scope>
    <scope>DISRUPTION PHENOTYPE</scope>
</reference>
<name>CHL1_CAEEL</name>
<sequence>MDEFSFPFQPYDIQLNLMREIRQCIEQRKIGIFESPTGTGKSLSVLCSTMTWLEAEELRISTDLSTRLGEVHTKITECDKITTADNWETAVREKMRAQDVETEILEQIQSRERLQSRIDQARRGMVEVSRKRKAPARDTDQFLEPQDEAAPSEEYNNDEKSEKQRDSDFFDDVDEEEEKPLKCLKIFYASRTHSQLEQLAEELAKTRFQPRIVTCASRGTLCVNEEVKKLKLNHLINEKCMELRKNGMSEKEKVQKLEKGTTKKTKTCATSCEFYNSTQIEDVVNGVLSNKLKSTLEVSKQGKLSNGCPYFATRKSVPQCQLVLLPYQVLLHDGTRKAWGIELKDNVIVLDEAHNVLNTISSLYSAEISTKSLTLALRLIREYNAHYKLKLLAHNLLYMKQLESLTSKMLIFLNSQSKEDVMTMAQLARNLNILEINLFKLAEYMEKTDLCKKFHGFYMRLQKEEIKKENEKPKLTGIQKLMAAKEAEPEPEAEPLPPPKPVPSPLFSLKSFIDALTNKCEDGRIIVEKSATEAKFRFMLLNPADRLSEVVTSARATILVGGTMEPAQLLVETLSRGSIGADSIRRFSCCHVIDDSQLLAVTVERTVDGKPFQLTYQTRGADTTLRSLATSIQALIPHIPNGVVIFVPSYDFLFNFQKKMKEFGILKRIEEKKAVFTESRQPTSDVWDRFSRAAKTSKGAILFAVVGGKMSEGINFCDELGRAVIVIGLPYPNKTSVELRERMKFLDTQMPNGGNLLYESLCMHAVNQAIGRAIRHRRDYAAVYLFDDRYAKESTRRKLSTWIGDRTQVKLGFGEIIRKTRSFFEANSKK</sequence>
<feature type="chain" id="PRO_0000431240" description="ATP-dependent DNA helicase chl-1" evidence="8">
    <location>
        <begin position="1"/>
        <end position="830"/>
    </location>
</feature>
<feature type="domain" description="Helicase ATP-binding" evidence="5">
    <location>
        <begin position="1"/>
        <end position="403"/>
    </location>
</feature>
<feature type="region of interest" description="Disordered" evidence="6">
    <location>
        <begin position="124"/>
        <end position="173"/>
    </location>
</feature>
<feature type="short sequence motif" description="DEAH box" evidence="5">
    <location>
        <begin position="351"/>
        <end position="354"/>
    </location>
</feature>
<feature type="compositionally biased region" description="Basic and acidic residues" evidence="6">
    <location>
        <begin position="124"/>
        <end position="140"/>
    </location>
</feature>
<feature type="compositionally biased region" description="Basic and acidic residues" evidence="6">
    <location>
        <begin position="157"/>
        <end position="168"/>
    </location>
</feature>
<feature type="binding site" evidence="5">
    <location>
        <begin position="35"/>
        <end position="42"/>
    </location>
    <ligand>
        <name>ATP</name>
        <dbReference type="ChEBI" id="CHEBI:30616"/>
    </ligand>
</feature>
<feature type="binding site" evidence="1">
    <location>
        <position position="222"/>
    </location>
    <ligand>
        <name>[4Fe-4S] cluster</name>
        <dbReference type="ChEBI" id="CHEBI:49883"/>
    </ligand>
</feature>
<feature type="binding site" evidence="1">
    <location>
        <position position="240"/>
    </location>
    <ligand>
        <name>[4Fe-4S] cluster</name>
        <dbReference type="ChEBI" id="CHEBI:49883"/>
    </ligand>
</feature>
<feature type="binding site" evidence="1">
    <location>
        <position position="272"/>
    </location>
    <ligand>
        <name>[4Fe-4S] cluster</name>
        <dbReference type="ChEBI" id="CHEBI:49883"/>
    </ligand>
</feature>
<feature type="binding site" evidence="1">
    <location>
        <position position="308"/>
    </location>
    <ligand>
        <name>[4Fe-4S] cluster</name>
        <dbReference type="ChEBI" id="CHEBI:49883"/>
    </ligand>
</feature>
<comment type="function">
    <text evidence="7">Required for normal cell proliferation and chromosome stability. Plays a role in DNA repair during replication.</text>
</comment>
<comment type="catalytic activity">
    <reaction evidence="3">
        <text>Couples ATP hydrolysis with the unwinding of duplex DNA at the replication fork by translocating in the 5'-3' direction. This creates two antiparallel DNA single strands (ssDNA). The leading ssDNA polymer is the template for DNA polymerase III holoenzyme which synthesizes a continuous strand.</text>
        <dbReference type="EC" id="5.6.2.3"/>
    </reaction>
</comment>
<comment type="catalytic activity">
    <reaction evidence="3">
        <text>ATP + H2O = ADP + phosphate + H(+)</text>
        <dbReference type="Rhea" id="RHEA:13065"/>
        <dbReference type="ChEBI" id="CHEBI:15377"/>
        <dbReference type="ChEBI" id="CHEBI:15378"/>
        <dbReference type="ChEBI" id="CHEBI:30616"/>
        <dbReference type="ChEBI" id="CHEBI:43474"/>
        <dbReference type="ChEBI" id="CHEBI:456216"/>
        <dbReference type="EC" id="5.6.2.3"/>
    </reaction>
</comment>
<comment type="cofactor">
    <cofactor evidence="1">
        <name>[4Fe-4S] cluster</name>
        <dbReference type="ChEBI" id="CHEBI:49883"/>
    </cofactor>
    <text evidence="1">Binds 1 [4Fe-4S] cluster.</text>
</comment>
<comment type="subcellular location">
    <subcellularLocation>
        <location evidence="2">Nucleus</location>
    </subcellularLocation>
</comment>
<comment type="disruption phenotype">
    <text evidence="7">Uncoordinated and sterile with cell proliferation defects in germ and somatic cells. Hermaphrodite gonads have fewer cells with 13% of homozygotes having only one gonad arm. Most hermaphrodite mutants contain sperm but only 20% contain oocytes that develop as far as diakinesis and those that develop exhibit abnormal karyotypes. Mutant adults contain significantly fewer D neurons and seam cells than wild type. No poly-guanine tract deletions but double mutants of chl-1 and dog-1 display increased deletion frequency when compared to dog-1 mutants.</text>
</comment>
<comment type="similarity">
    <text evidence="4">Belongs to the DEAD box helicase family. DEAH subfamily. DDX11/CHL1 sub-subfamily.</text>
</comment>
<evidence type="ECO:0000250" key="1">
    <source>
        <dbReference type="UniProtKB" id="P18074"/>
    </source>
</evidence>
<evidence type="ECO:0000250" key="2">
    <source>
        <dbReference type="UniProtKB" id="P22516"/>
    </source>
</evidence>
<evidence type="ECO:0000250" key="3">
    <source>
        <dbReference type="UniProtKB" id="Q96FC9"/>
    </source>
</evidence>
<evidence type="ECO:0000255" key="4"/>
<evidence type="ECO:0000255" key="5">
    <source>
        <dbReference type="PROSITE-ProRule" id="PRU00541"/>
    </source>
</evidence>
<evidence type="ECO:0000256" key="6">
    <source>
        <dbReference type="SAM" id="MobiDB-lite"/>
    </source>
</evidence>
<evidence type="ECO:0000269" key="7">
    <source>
    </source>
</evidence>
<evidence type="ECO:0000305" key="8"/>
<evidence type="ECO:0000312" key="9">
    <source>
        <dbReference type="Proteomes" id="UP000001940"/>
    </source>
</evidence>
<evidence type="ECO:0000312" key="10">
    <source>
        <dbReference type="WormBase" id="M03C11.2"/>
    </source>
</evidence>
<organism evidence="9">
    <name type="scientific">Caenorhabditis elegans</name>
    <dbReference type="NCBI Taxonomy" id="6239"/>
    <lineage>
        <taxon>Eukaryota</taxon>
        <taxon>Metazoa</taxon>
        <taxon>Ecdysozoa</taxon>
        <taxon>Nematoda</taxon>
        <taxon>Chromadorea</taxon>
        <taxon>Rhabditida</taxon>
        <taxon>Rhabditina</taxon>
        <taxon>Rhabditomorpha</taxon>
        <taxon>Rhabditoidea</taxon>
        <taxon>Rhabditidae</taxon>
        <taxon>Peloderinae</taxon>
        <taxon>Caenorhabditis</taxon>
    </lineage>
</organism>